<organism>
    <name type="scientific">Feline sarcoma virus (strain Gardner-Rasheed)</name>
    <dbReference type="NCBI Taxonomy" id="11775"/>
    <lineage>
        <taxon>Viruses</taxon>
        <taxon>Riboviria</taxon>
        <taxon>Pararnavirae</taxon>
        <taxon>Artverviricota</taxon>
        <taxon>Revtraviricetes</taxon>
        <taxon>Ortervirales</taxon>
        <taxon>Retroviridae</taxon>
        <taxon>Orthoretrovirinae</taxon>
        <taxon>Gammaretrovirus</taxon>
        <taxon>Feline leukemia virus</taxon>
    </lineage>
</organism>
<sequence length="545" mass="61516">ARALCRPAVCRPRPLPPLPPTAMEEEVAALVIDNGSGMCKAGFAGDDAPRAVFPSIVGRPRHQGVMVGMGQKDSYVGDEAQSKRGILTLKYPIEHGIVTNWDDMEKIWHHTFYNELRVAPEEHPVLLTEAPLNPKANREKMTQIMFETFNIPSNYVAPVDSIQAEEWYFGKIGRKDAERQLLSPGNARGAFLVRESETTKGAYSLSIRDWDEARGDHVKHYKIRKLDTGGYYITTRAQFNSVQELVQHYVEVNDGLCHLLTAACTTMKPQTMGLAKDAWEISRSSITLQRRLGTGCFGDVWLGMWNGSTKVAVKTLKPGTMSPKASLEEAQIMKLLRHDKLVQLYAVVPEEPIYIVTEFMCHGSLLEFLKDQEGQDLTLPQLVDMAAQVAEGMAYMERMDYIHRDLRAANILVGERLVCKIADFGLARLIEDNEYNPRQGAKFPIKWTAPEAALFGRFTIKSDVWSFGILLTELISKGRVPYPGMNNREVLEQVEHGYHMPCPPGCPASLYEAMEQTWRLDPEERPTFEYLQSFLEDYFNGPQQN</sequence>
<reference key="1">
    <citation type="journal article" date="1984" name="Science">
        <title>Gene product of v-fgr onc: hybrid protein containing a portion of actin and a tyrosine-specific protein kinase.</title>
        <authorList>
            <person name="Naharro G."/>
            <person name="Robbins K.C."/>
            <person name="Reddy E.P."/>
        </authorList>
    </citation>
    <scope>NUCLEOTIDE SEQUENCE [GENOMIC DNA]</scope>
</reference>
<gene>
    <name type="primary">V-FGR</name>
    <name type="synonym">SRC-2</name>
</gene>
<proteinExistence type="inferred from homology"/>
<keyword id="KW-0067">ATP-binding</keyword>
<keyword id="KW-0418">Kinase</keyword>
<keyword id="KW-0547">Nucleotide-binding</keyword>
<keyword id="KW-0553">Oncogene</keyword>
<keyword id="KW-0597">Phosphoprotein</keyword>
<keyword id="KW-0727">SH2 domain</keyword>
<keyword id="KW-0808">Transferase</keyword>
<keyword id="KW-0829">Tyrosine-protein kinase</keyword>
<organismHost>
    <name type="scientific">Felidae</name>
    <name type="common">cat family</name>
    <dbReference type="NCBI Taxonomy" id="9681"/>
</organismHost>
<protein>
    <recommendedName>
        <fullName>Tyrosine-protein kinase transforming protein Fgr</fullName>
        <ecNumber>2.7.10.2</ecNumber>
    </recommendedName>
</protein>
<feature type="chain" id="PRO_0000088090" description="Tyrosine-protein kinase transforming protein Fgr">
    <location>
        <begin position="1"/>
        <end position="545"/>
    </location>
</feature>
<feature type="domain" description="SH2" evidence="3">
    <location>
        <begin position="167"/>
        <end position="264"/>
    </location>
</feature>
<feature type="domain" description="Protein kinase" evidence="2">
    <location>
        <begin position="286"/>
        <end position="539"/>
    </location>
</feature>
<feature type="region of interest" description="Actin">
    <location>
        <begin position="23"/>
        <end position="157"/>
    </location>
</feature>
<feature type="active site" description="Proton acceptor" evidence="2 4">
    <location>
        <position position="405"/>
    </location>
</feature>
<feature type="binding site" evidence="2">
    <location>
        <begin position="292"/>
        <end position="300"/>
    </location>
    <ligand>
        <name>ATP</name>
        <dbReference type="ChEBI" id="CHEBI:30616"/>
    </ligand>
</feature>
<feature type="binding site" evidence="2">
    <location>
        <position position="314"/>
    </location>
    <ligand>
        <name>ATP</name>
        <dbReference type="ChEBI" id="CHEBI:30616"/>
    </ligand>
</feature>
<feature type="modified residue" description="Phosphotyrosine; by autocatalysis" evidence="1">
    <location>
        <position position="435"/>
    </location>
</feature>
<name>FGR_FSVGR</name>
<comment type="catalytic activity">
    <reaction evidence="4">
        <text>L-tyrosyl-[protein] + ATP = O-phospho-L-tyrosyl-[protein] + ADP + H(+)</text>
        <dbReference type="Rhea" id="RHEA:10596"/>
        <dbReference type="Rhea" id="RHEA-COMP:10136"/>
        <dbReference type="Rhea" id="RHEA-COMP:20101"/>
        <dbReference type="ChEBI" id="CHEBI:15378"/>
        <dbReference type="ChEBI" id="CHEBI:30616"/>
        <dbReference type="ChEBI" id="CHEBI:46858"/>
        <dbReference type="ChEBI" id="CHEBI:61978"/>
        <dbReference type="ChEBI" id="CHEBI:456216"/>
        <dbReference type="EC" id="2.7.10.2"/>
    </reaction>
</comment>
<comment type="miscellaneous">
    <text>This protein is synthesized as a Gag-Fgr polyprotein.</text>
</comment>
<comment type="similarity">
    <text evidence="2">Belongs to the protein kinase superfamily. Tyr protein kinase family. SRC subfamily.</text>
</comment>
<comment type="sequence caution" evidence="5">
    <conflict type="erroneous initiation">
        <sequence resource="EMBL-CDS" id="CAA25063"/>
    </conflict>
</comment>
<accession>P00544</accession>
<evidence type="ECO:0000250" key="1"/>
<evidence type="ECO:0000255" key="2">
    <source>
        <dbReference type="PROSITE-ProRule" id="PRU00159"/>
    </source>
</evidence>
<evidence type="ECO:0000255" key="3">
    <source>
        <dbReference type="PROSITE-ProRule" id="PRU00191"/>
    </source>
</evidence>
<evidence type="ECO:0000255" key="4">
    <source>
        <dbReference type="PROSITE-ProRule" id="PRU10028"/>
    </source>
</evidence>
<evidence type="ECO:0000305" key="5"/>
<dbReference type="EC" id="2.7.10.2"/>
<dbReference type="EMBL" id="X00255">
    <property type="protein sequence ID" value="CAA25063.1"/>
    <property type="status" value="ALT_INIT"/>
    <property type="molecule type" value="Genomic_DNA"/>
</dbReference>
<dbReference type="PIR" id="A00653">
    <property type="entry name" value="TVMVRR"/>
</dbReference>
<dbReference type="SMR" id="P00544"/>
<dbReference type="BRENDA" id="2.7.10.2">
    <property type="organism ID" value="2234"/>
</dbReference>
<dbReference type="GO" id="GO:0005524">
    <property type="term" value="F:ATP binding"/>
    <property type="evidence" value="ECO:0007669"/>
    <property type="project" value="UniProtKB-KW"/>
</dbReference>
<dbReference type="GO" id="GO:0004715">
    <property type="term" value="F:non-membrane spanning protein tyrosine kinase activity"/>
    <property type="evidence" value="ECO:0007669"/>
    <property type="project" value="UniProtKB-EC"/>
</dbReference>
<dbReference type="CDD" id="cd10367">
    <property type="entry name" value="SH2_Src_Fgr"/>
    <property type="match status" value="1"/>
</dbReference>
<dbReference type="FunFam" id="2.30.36.70:FF:000001">
    <property type="entry name" value="Actin, alpha skeletal muscle"/>
    <property type="match status" value="1"/>
</dbReference>
<dbReference type="FunFam" id="3.30.420.40:FF:000291">
    <property type="entry name" value="Actin, alpha skeletal muscle"/>
    <property type="match status" value="1"/>
</dbReference>
<dbReference type="FunFam" id="1.10.510.10:FF:000553">
    <property type="entry name" value="Tyrosine-protein kinase"/>
    <property type="match status" value="1"/>
</dbReference>
<dbReference type="FunFam" id="3.30.200.20:FF:000016">
    <property type="entry name" value="Tyrosine-protein kinase"/>
    <property type="match status" value="1"/>
</dbReference>
<dbReference type="FunFam" id="3.30.505.10:FF:000001">
    <property type="entry name" value="Tyrosine-protein kinase"/>
    <property type="match status" value="1"/>
</dbReference>
<dbReference type="Gene3D" id="3.30.420.40">
    <property type="match status" value="1"/>
</dbReference>
<dbReference type="Gene3D" id="2.30.36.70">
    <property type="entry name" value="Actin, Chain A, domain 2"/>
    <property type="match status" value="1"/>
</dbReference>
<dbReference type="Gene3D" id="3.30.200.20">
    <property type="entry name" value="Phosphorylase Kinase, domain 1"/>
    <property type="match status" value="1"/>
</dbReference>
<dbReference type="Gene3D" id="3.30.505.10">
    <property type="entry name" value="SH2 domain"/>
    <property type="match status" value="1"/>
</dbReference>
<dbReference type="Gene3D" id="1.10.510.10">
    <property type="entry name" value="Transferase(Phosphotransferase) domain 1"/>
    <property type="match status" value="1"/>
</dbReference>
<dbReference type="InterPro" id="IPR004000">
    <property type="entry name" value="Actin"/>
</dbReference>
<dbReference type="InterPro" id="IPR020902">
    <property type="entry name" value="Actin/actin-like_CS"/>
</dbReference>
<dbReference type="InterPro" id="IPR004001">
    <property type="entry name" value="Actin_CS"/>
</dbReference>
<dbReference type="InterPro" id="IPR043129">
    <property type="entry name" value="ATPase_NBD"/>
</dbReference>
<dbReference type="InterPro" id="IPR035693">
    <property type="entry name" value="Fgr_SH2"/>
</dbReference>
<dbReference type="InterPro" id="IPR011009">
    <property type="entry name" value="Kinase-like_dom_sf"/>
</dbReference>
<dbReference type="InterPro" id="IPR050198">
    <property type="entry name" value="Non-receptor_tyrosine_kinases"/>
</dbReference>
<dbReference type="InterPro" id="IPR000719">
    <property type="entry name" value="Prot_kinase_dom"/>
</dbReference>
<dbReference type="InterPro" id="IPR017441">
    <property type="entry name" value="Protein_kinase_ATP_BS"/>
</dbReference>
<dbReference type="InterPro" id="IPR001245">
    <property type="entry name" value="Ser-Thr/Tyr_kinase_cat_dom"/>
</dbReference>
<dbReference type="InterPro" id="IPR000980">
    <property type="entry name" value="SH2"/>
</dbReference>
<dbReference type="InterPro" id="IPR036860">
    <property type="entry name" value="SH2_dom_sf"/>
</dbReference>
<dbReference type="InterPro" id="IPR008266">
    <property type="entry name" value="Tyr_kinase_AS"/>
</dbReference>
<dbReference type="InterPro" id="IPR020635">
    <property type="entry name" value="Tyr_kinase_cat_dom"/>
</dbReference>
<dbReference type="PANTHER" id="PTHR24418">
    <property type="entry name" value="TYROSINE-PROTEIN KINASE"/>
    <property type="match status" value="1"/>
</dbReference>
<dbReference type="Pfam" id="PF00022">
    <property type="entry name" value="Actin"/>
    <property type="match status" value="1"/>
</dbReference>
<dbReference type="Pfam" id="PF07714">
    <property type="entry name" value="PK_Tyr_Ser-Thr"/>
    <property type="match status" value="1"/>
</dbReference>
<dbReference type="Pfam" id="PF00017">
    <property type="entry name" value="SH2"/>
    <property type="match status" value="1"/>
</dbReference>
<dbReference type="PRINTS" id="PR00190">
    <property type="entry name" value="ACTIN"/>
</dbReference>
<dbReference type="PRINTS" id="PR00401">
    <property type="entry name" value="SH2DOMAIN"/>
</dbReference>
<dbReference type="PRINTS" id="PR00109">
    <property type="entry name" value="TYRKINASE"/>
</dbReference>
<dbReference type="SMART" id="SM00268">
    <property type="entry name" value="ACTIN"/>
    <property type="match status" value="1"/>
</dbReference>
<dbReference type="SMART" id="SM00252">
    <property type="entry name" value="SH2"/>
    <property type="match status" value="1"/>
</dbReference>
<dbReference type="SMART" id="SM00219">
    <property type="entry name" value="TyrKc"/>
    <property type="match status" value="1"/>
</dbReference>
<dbReference type="SUPFAM" id="SSF53067">
    <property type="entry name" value="Actin-like ATPase domain"/>
    <property type="match status" value="1"/>
</dbReference>
<dbReference type="SUPFAM" id="SSF56112">
    <property type="entry name" value="Protein kinase-like (PK-like)"/>
    <property type="match status" value="1"/>
</dbReference>
<dbReference type="SUPFAM" id="SSF55550">
    <property type="entry name" value="SH2 domain"/>
    <property type="match status" value="1"/>
</dbReference>
<dbReference type="PROSITE" id="PS00406">
    <property type="entry name" value="ACTINS_1"/>
    <property type="match status" value="1"/>
</dbReference>
<dbReference type="PROSITE" id="PS01132">
    <property type="entry name" value="ACTINS_ACT_LIKE"/>
    <property type="match status" value="1"/>
</dbReference>
<dbReference type="PROSITE" id="PS00107">
    <property type="entry name" value="PROTEIN_KINASE_ATP"/>
    <property type="match status" value="1"/>
</dbReference>
<dbReference type="PROSITE" id="PS50011">
    <property type="entry name" value="PROTEIN_KINASE_DOM"/>
    <property type="match status" value="1"/>
</dbReference>
<dbReference type="PROSITE" id="PS00109">
    <property type="entry name" value="PROTEIN_KINASE_TYR"/>
    <property type="match status" value="1"/>
</dbReference>
<dbReference type="PROSITE" id="PS50001">
    <property type="entry name" value="SH2"/>
    <property type="match status" value="1"/>
</dbReference>